<gene>
    <name evidence="1" type="primary">ctaB</name>
    <name type="ordered locus">Bamb_2894</name>
</gene>
<proteinExistence type="inferred from homology"/>
<accession>Q0BBM3</accession>
<sequence length="300" mass="33000">MQSTLSQSPGSRFSQYMALTKPRVTQLAVFCAVIGMFLATPGMVPWHVLIGGTIGIWLLAGAAFAINCLVEQKIDAMMRRTAWRPSARGEITTPQILLFSAVLGSVGAWTLYTFTNPLTMWLTIATFVGYAVVYTLLLKPMTPQNIVIGGASGAMPPALGWAAVTGAVPGDAWILVLIIFVWTPPHFWVLALYRRKDYENAGLPMLPVTHGEKFTRLHILLYTVILFAVTLMPFISGMSGVVYLASAVLLGAVFLAYAWKIYRDYSDELARKAFRYSIVYLSLLFAALLVDHYARPLLGV</sequence>
<dbReference type="EC" id="2.5.1.141" evidence="1"/>
<dbReference type="EMBL" id="CP000440">
    <property type="protein sequence ID" value="ABI88450.1"/>
    <property type="molecule type" value="Genomic_DNA"/>
</dbReference>
<dbReference type="SMR" id="Q0BBM3"/>
<dbReference type="KEGG" id="bam:Bamb_2894"/>
<dbReference type="PATRIC" id="fig|339670.21.peg.1989"/>
<dbReference type="eggNOG" id="COG0109">
    <property type="taxonomic scope" value="Bacteria"/>
</dbReference>
<dbReference type="UniPathway" id="UPA00834">
    <property type="reaction ID" value="UER00712"/>
</dbReference>
<dbReference type="Proteomes" id="UP000000662">
    <property type="component" value="Chromosome 1"/>
</dbReference>
<dbReference type="GO" id="GO:0005886">
    <property type="term" value="C:plasma membrane"/>
    <property type="evidence" value="ECO:0007669"/>
    <property type="project" value="UniProtKB-SubCell"/>
</dbReference>
<dbReference type="GO" id="GO:0008495">
    <property type="term" value="F:protoheme IX farnesyltransferase activity"/>
    <property type="evidence" value="ECO:0007669"/>
    <property type="project" value="UniProtKB-UniRule"/>
</dbReference>
<dbReference type="GO" id="GO:0048034">
    <property type="term" value="P:heme O biosynthetic process"/>
    <property type="evidence" value="ECO:0007669"/>
    <property type="project" value="UniProtKB-UniRule"/>
</dbReference>
<dbReference type="CDD" id="cd13957">
    <property type="entry name" value="PT_UbiA_Cox10"/>
    <property type="match status" value="1"/>
</dbReference>
<dbReference type="Gene3D" id="1.10.357.140">
    <property type="entry name" value="UbiA prenyltransferase"/>
    <property type="match status" value="1"/>
</dbReference>
<dbReference type="HAMAP" id="MF_00154">
    <property type="entry name" value="CyoE_CtaB"/>
    <property type="match status" value="1"/>
</dbReference>
<dbReference type="InterPro" id="IPR006369">
    <property type="entry name" value="Protohaem_IX_farnesylTrfase"/>
</dbReference>
<dbReference type="InterPro" id="IPR000537">
    <property type="entry name" value="UbiA_prenyltransferase"/>
</dbReference>
<dbReference type="InterPro" id="IPR030470">
    <property type="entry name" value="UbiA_prenylTrfase_CS"/>
</dbReference>
<dbReference type="InterPro" id="IPR044878">
    <property type="entry name" value="UbiA_sf"/>
</dbReference>
<dbReference type="NCBIfam" id="TIGR01473">
    <property type="entry name" value="cyoE_ctaB"/>
    <property type="match status" value="1"/>
</dbReference>
<dbReference type="NCBIfam" id="NF003349">
    <property type="entry name" value="PRK04375.1-2"/>
    <property type="match status" value="1"/>
</dbReference>
<dbReference type="PANTHER" id="PTHR43448:SF7">
    <property type="entry name" value="4-HYDROXYBENZOATE SOLANESYLTRANSFERASE"/>
    <property type="match status" value="1"/>
</dbReference>
<dbReference type="PANTHER" id="PTHR43448">
    <property type="entry name" value="PROTOHEME IX FARNESYLTRANSFERASE, MITOCHONDRIAL"/>
    <property type="match status" value="1"/>
</dbReference>
<dbReference type="Pfam" id="PF01040">
    <property type="entry name" value="UbiA"/>
    <property type="match status" value="1"/>
</dbReference>
<dbReference type="PROSITE" id="PS00943">
    <property type="entry name" value="UBIA"/>
    <property type="match status" value="1"/>
</dbReference>
<organism>
    <name type="scientific">Burkholderia ambifaria (strain ATCC BAA-244 / DSM 16087 / CCUG 44356 / LMG 19182 / AMMD)</name>
    <name type="common">Burkholderia cepacia (strain AMMD)</name>
    <dbReference type="NCBI Taxonomy" id="339670"/>
    <lineage>
        <taxon>Bacteria</taxon>
        <taxon>Pseudomonadati</taxon>
        <taxon>Pseudomonadota</taxon>
        <taxon>Betaproteobacteria</taxon>
        <taxon>Burkholderiales</taxon>
        <taxon>Burkholderiaceae</taxon>
        <taxon>Burkholderia</taxon>
        <taxon>Burkholderia cepacia complex</taxon>
    </lineage>
</organism>
<keyword id="KW-0997">Cell inner membrane</keyword>
<keyword id="KW-1003">Cell membrane</keyword>
<keyword id="KW-0350">Heme biosynthesis</keyword>
<keyword id="KW-0472">Membrane</keyword>
<keyword id="KW-0808">Transferase</keyword>
<keyword id="KW-0812">Transmembrane</keyword>
<keyword id="KW-1133">Transmembrane helix</keyword>
<evidence type="ECO:0000255" key="1">
    <source>
        <dbReference type="HAMAP-Rule" id="MF_00154"/>
    </source>
</evidence>
<name>COXX_BURCM</name>
<comment type="function">
    <text evidence="1">Converts heme B (protoheme IX) to heme O by substitution of the vinyl group on carbon 2 of heme B porphyrin ring with a hydroxyethyl farnesyl side group.</text>
</comment>
<comment type="catalytic activity">
    <reaction evidence="1">
        <text>heme b + (2E,6E)-farnesyl diphosphate + H2O = Fe(II)-heme o + diphosphate</text>
        <dbReference type="Rhea" id="RHEA:28070"/>
        <dbReference type="ChEBI" id="CHEBI:15377"/>
        <dbReference type="ChEBI" id="CHEBI:33019"/>
        <dbReference type="ChEBI" id="CHEBI:60344"/>
        <dbReference type="ChEBI" id="CHEBI:60530"/>
        <dbReference type="ChEBI" id="CHEBI:175763"/>
        <dbReference type="EC" id="2.5.1.141"/>
    </reaction>
</comment>
<comment type="pathway">
    <text evidence="1">Porphyrin-containing compound metabolism; heme O biosynthesis; heme O from protoheme: step 1/1.</text>
</comment>
<comment type="subcellular location">
    <subcellularLocation>
        <location evidence="1">Cell inner membrane</location>
        <topology evidence="1">Multi-pass membrane protein</topology>
    </subcellularLocation>
</comment>
<comment type="miscellaneous">
    <text evidence="1">Carbon 2 of the heme B porphyrin ring is defined according to the Fischer nomenclature.</text>
</comment>
<comment type="similarity">
    <text evidence="1">Belongs to the UbiA prenyltransferase family. Protoheme IX farnesyltransferase subfamily.</text>
</comment>
<protein>
    <recommendedName>
        <fullName evidence="1">Protoheme IX farnesyltransferase</fullName>
        <ecNumber evidence="1">2.5.1.141</ecNumber>
    </recommendedName>
    <alternativeName>
        <fullName evidence="1">Heme B farnesyltransferase</fullName>
    </alternativeName>
    <alternativeName>
        <fullName evidence="1">Heme O synthase</fullName>
    </alternativeName>
</protein>
<reference key="1">
    <citation type="submission" date="2006-08" db="EMBL/GenBank/DDBJ databases">
        <title>Complete sequence of chromosome 1 of Burkholderia cepacia AMMD.</title>
        <authorList>
            <person name="Copeland A."/>
            <person name="Lucas S."/>
            <person name="Lapidus A."/>
            <person name="Barry K."/>
            <person name="Detter J.C."/>
            <person name="Glavina del Rio T."/>
            <person name="Hammon N."/>
            <person name="Israni S."/>
            <person name="Pitluck S."/>
            <person name="Bruce D."/>
            <person name="Chain P."/>
            <person name="Malfatti S."/>
            <person name="Shin M."/>
            <person name="Vergez L."/>
            <person name="Schmutz J."/>
            <person name="Larimer F."/>
            <person name="Land M."/>
            <person name="Hauser L."/>
            <person name="Kyrpides N."/>
            <person name="Kim E."/>
            <person name="Parke J."/>
            <person name="Coenye T."/>
            <person name="Konstantinidis K."/>
            <person name="Ramette A."/>
            <person name="Tiedje J."/>
            <person name="Richardson P."/>
        </authorList>
    </citation>
    <scope>NUCLEOTIDE SEQUENCE [LARGE SCALE GENOMIC DNA]</scope>
    <source>
        <strain>ATCC BAA-244 / DSM 16087 / CCUG 44356 / LMG 19182 / AMMD</strain>
    </source>
</reference>
<feature type="chain" id="PRO_0000327023" description="Protoheme IX farnesyltransferase">
    <location>
        <begin position="1"/>
        <end position="300"/>
    </location>
</feature>
<feature type="transmembrane region" description="Helical" evidence="1">
    <location>
        <begin position="24"/>
        <end position="44"/>
    </location>
</feature>
<feature type="transmembrane region" description="Helical" evidence="1">
    <location>
        <begin position="46"/>
        <end position="66"/>
    </location>
</feature>
<feature type="transmembrane region" description="Helical" evidence="1">
    <location>
        <begin position="94"/>
        <end position="114"/>
    </location>
</feature>
<feature type="transmembrane region" description="Helical" evidence="1">
    <location>
        <begin position="118"/>
        <end position="138"/>
    </location>
</feature>
<feature type="transmembrane region" description="Helical" evidence="1">
    <location>
        <begin position="146"/>
        <end position="166"/>
    </location>
</feature>
<feature type="transmembrane region" description="Helical" evidence="1">
    <location>
        <begin position="172"/>
        <end position="192"/>
    </location>
</feature>
<feature type="transmembrane region" description="Helical" evidence="1">
    <location>
        <begin position="224"/>
        <end position="244"/>
    </location>
</feature>
<feature type="transmembrane region" description="Helical" evidence="1">
    <location>
        <begin position="278"/>
        <end position="298"/>
    </location>
</feature>